<protein>
    <recommendedName>
        <fullName evidence="1">Phenylalanine--tRNA ligase alpha subunit</fullName>
        <ecNumber evidence="1">6.1.1.20</ecNumber>
    </recommendedName>
    <alternativeName>
        <fullName evidence="1">Phenylalanyl-tRNA synthetase alpha subunit</fullName>
        <shortName evidence="1">PheRS</shortName>
    </alternativeName>
</protein>
<proteinExistence type="inferred from homology"/>
<sequence>MSHLAELVANAAAAINQASDVAALDNVRVEYLGKKGHLTLQMTTLRDLPPEERPAAGAVINAAKEQVQQALNARKAELESAALNARLAAETIDISLPGRRIENGGLHPVTRTIDRIESFFGELGFTVATGPEIEDDYHNFDALNIPGHHPARADHDTFWFDATRLLRTQTSGVQIRTMKAQQPPIRIIAPGRVYRNDYDQTHTPMFHQMEGLIVDTNISFTNLKGTLHDFLRNFFEEDLQIRFRPSYFPFTEPSAEVDVMGKNGKWLEVLGCGMVHPNVLRNVGIDPEIYSGFAFGMGMERLTMLRYGVTDLRSFFENDLRFLKQFK</sequence>
<reference key="1">
    <citation type="journal article" date="2009" name="BMC Genomics">
        <title>Pseudogene accumulation in the evolutionary histories of Salmonella enterica serovars Paratyphi A and Typhi.</title>
        <authorList>
            <person name="Holt K.E."/>
            <person name="Thomson N.R."/>
            <person name="Wain J."/>
            <person name="Langridge G.C."/>
            <person name="Hasan R."/>
            <person name="Bhutta Z.A."/>
            <person name="Quail M.A."/>
            <person name="Norbertczak H."/>
            <person name="Walker D."/>
            <person name="Simmonds M."/>
            <person name="White B."/>
            <person name="Bason N."/>
            <person name="Mungall K."/>
            <person name="Dougan G."/>
            <person name="Parkhill J."/>
        </authorList>
    </citation>
    <scope>NUCLEOTIDE SEQUENCE [LARGE SCALE GENOMIC DNA]</scope>
    <source>
        <strain>AKU_12601</strain>
    </source>
</reference>
<keyword id="KW-0030">Aminoacyl-tRNA synthetase</keyword>
<keyword id="KW-0067">ATP-binding</keyword>
<keyword id="KW-0963">Cytoplasm</keyword>
<keyword id="KW-0436">Ligase</keyword>
<keyword id="KW-0460">Magnesium</keyword>
<keyword id="KW-0479">Metal-binding</keyword>
<keyword id="KW-0547">Nucleotide-binding</keyword>
<keyword id="KW-0648">Protein biosynthesis</keyword>
<evidence type="ECO:0000255" key="1">
    <source>
        <dbReference type="HAMAP-Rule" id="MF_00281"/>
    </source>
</evidence>
<feature type="chain" id="PRO_1000114914" description="Phenylalanine--tRNA ligase alpha subunit">
    <location>
        <begin position="1"/>
        <end position="327"/>
    </location>
</feature>
<feature type="binding site" evidence="1">
    <location>
        <position position="252"/>
    </location>
    <ligand>
        <name>Mg(2+)</name>
        <dbReference type="ChEBI" id="CHEBI:18420"/>
        <note>shared with beta subunit</note>
    </ligand>
</feature>
<accession>B5BA38</accession>
<name>SYFA_SALPK</name>
<comment type="catalytic activity">
    <reaction evidence="1">
        <text>tRNA(Phe) + L-phenylalanine + ATP = L-phenylalanyl-tRNA(Phe) + AMP + diphosphate + H(+)</text>
        <dbReference type="Rhea" id="RHEA:19413"/>
        <dbReference type="Rhea" id="RHEA-COMP:9668"/>
        <dbReference type="Rhea" id="RHEA-COMP:9699"/>
        <dbReference type="ChEBI" id="CHEBI:15378"/>
        <dbReference type="ChEBI" id="CHEBI:30616"/>
        <dbReference type="ChEBI" id="CHEBI:33019"/>
        <dbReference type="ChEBI" id="CHEBI:58095"/>
        <dbReference type="ChEBI" id="CHEBI:78442"/>
        <dbReference type="ChEBI" id="CHEBI:78531"/>
        <dbReference type="ChEBI" id="CHEBI:456215"/>
        <dbReference type="EC" id="6.1.1.20"/>
    </reaction>
</comment>
<comment type="cofactor">
    <cofactor evidence="1">
        <name>Mg(2+)</name>
        <dbReference type="ChEBI" id="CHEBI:18420"/>
    </cofactor>
    <text evidence="1">Binds 2 magnesium ions per tetramer.</text>
</comment>
<comment type="subunit">
    <text evidence="1">Tetramer of two alpha and two beta subunits.</text>
</comment>
<comment type="subcellular location">
    <subcellularLocation>
        <location evidence="1">Cytoplasm</location>
    </subcellularLocation>
</comment>
<comment type="similarity">
    <text evidence="1">Belongs to the class-II aminoacyl-tRNA synthetase family. Phe-tRNA synthetase alpha subunit type 1 subfamily.</text>
</comment>
<dbReference type="EC" id="6.1.1.20" evidence="1"/>
<dbReference type="EMBL" id="FM200053">
    <property type="protein sequence ID" value="CAR59577.1"/>
    <property type="molecule type" value="Genomic_DNA"/>
</dbReference>
<dbReference type="RefSeq" id="WP_000018570.1">
    <property type="nucleotide sequence ID" value="NC_011147.1"/>
</dbReference>
<dbReference type="SMR" id="B5BA38"/>
<dbReference type="KEGG" id="sek:SSPA1398"/>
<dbReference type="HOGENOM" id="CLU_025086_0_1_6"/>
<dbReference type="Proteomes" id="UP000001869">
    <property type="component" value="Chromosome"/>
</dbReference>
<dbReference type="GO" id="GO:0005737">
    <property type="term" value="C:cytoplasm"/>
    <property type="evidence" value="ECO:0007669"/>
    <property type="project" value="UniProtKB-SubCell"/>
</dbReference>
<dbReference type="GO" id="GO:0005524">
    <property type="term" value="F:ATP binding"/>
    <property type="evidence" value="ECO:0007669"/>
    <property type="project" value="UniProtKB-UniRule"/>
</dbReference>
<dbReference type="GO" id="GO:0000287">
    <property type="term" value="F:magnesium ion binding"/>
    <property type="evidence" value="ECO:0007669"/>
    <property type="project" value="UniProtKB-UniRule"/>
</dbReference>
<dbReference type="GO" id="GO:0004826">
    <property type="term" value="F:phenylalanine-tRNA ligase activity"/>
    <property type="evidence" value="ECO:0007669"/>
    <property type="project" value="UniProtKB-UniRule"/>
</dbReference>
<dbReference type="GO" id="GO:0000049">
    <property type="term" value="F:tRNA binding"/>
    <property type="evidence" value="ECO:0007669"/>
    <property type="project" value="InterPro"/>
</dbReference>
<dbReference type="GO" id="GO:0006432">
    <property type="term" value="P:phenylalanyl-tRNA aminoacylation"/>
    <property type="evidence" value="ECO:0007669"/>
    <property type="project" value="UniProtKB-UniRule"/>
</dbReference>
<dbReference type="CDD" id="cd00496">
    <property type="entry name" value="PheRS_alpha_core"/>
    <property type="match status" value="1"/>
</dbReference>
<dbReference type="FunFam" id="3.30.930.10:FF:000003">
    <property type="entry name" value="Phenylalanine--tRNA ligase alpha subunit"/>
    <property type="match status" value="1"/>
</dbReference>
<dbReference type="Gene3D" id="3.30.930.10">
    <property type="entry name" value="Bira Bifunctional Protein, Domain 2"/>
    <property type="match status" value="1"/>
</dbReference>
<dbReference type="HAMAP" id="MF_00281">
    <property type="entry name" value="Phe_tRNA_synth_alpha1"/>
    <property type="match status" value="1"/>
</dbReference>
<dbReference type="InterPro" id="IPR006195">
    <property type="entry name" value="aa-tRNA-synth_II"/>
</dbReference>
<dbReference type="InterPro" id="IPR045864">
    <property type="entry name" value="aa-tRNA-synth_II/BPL/LPL"/>
</dbReference>
<dbReference type="InterPro" id="IPR004529">
    <property type="entry name" value="Phe-tRNA-synth_IIc_asu"/>
</dbReference>
<dbReference type="InterPro" id="IPR004188">
    <property type="entry name" value="Phe-tRNA_ligase_II_N"/>
</dbReference>
<dbReference type="InterPro" id="IPR022911">
    <property type="entry name" value="Phe_tRNA_ligase_alpha1_bac"/>
</dbReference>
<dbReference type="InterPro" id="IPR002319">
    <property type="entry name" value="Phenylalanyl-tRNA_Synthase"/>
</dbReference>
<dbReference type="InterPro" id="IPR010978">
    <property type="entry name" value="tRNA-bd_arm"/>
</dbReference>
<dbReference type="NCBIfam" id="TIGR00468">
    <property type="entry name" value="pheS"/>
    <property type="match status" value="1"/>
</dbReference>
<dbReference type="PANTHER" id="PTHR11538:SF41">
    <property type="entry name" value="PHENYLALANINE--TRNA LIGASE, MITOCHONDRIAL"/>
    <property type="match status" value="1"/>
</dbReference>
<dbReference type="PANTHER" id="PTHR11538">
    <property type="entry name" value="PHENYLALANYL-TRNA SYNTHETASE"/>
    <property type="match status" value="1"/>
</dbReference>
<dbReference type="Pfam" id="PF02912">
    <property type="entry name" value="Phe_tRNA-synt_N"/>
    <property type="match status" value="1"/>
</dbReference>
<dbReference type="Pfam" id="PF01409">
    <property type="entry name" value="tRNA-synt_2d"/>
    <property type="match status" value="1"/>
</dbReference>
<dbReference type="SUPFAM" id="SSF55681">
    <property type="entry name" value="Class II aaRS and biotin synthetases"/>
    <property type="match status" value="1"/>
</dbReference>
<dbReference type="SUPFAM" id="SSF46589">
    <property type="entry name" value="tRNA-binding arm"/>
    <property type="match status" value="1"/>
</dbReference>
<dbReference type="PROSITE" id="PS50862">
    <property type="entry name" value="AA_TRNA_LIGASE_II"/>
    <property type="match status" value="1"/>
</dbReference>
<organism>
    <name type="scientific">Salmonella paratyphi A (strain AKU_12601)</name>
    <dbReference type="NCBI Taxonomy" id="554290"/>
    <lineage>
        <taxon>Bacteria</taxon>
        <taxon>Pseudomonadati</taxon>
        <taxon>Pseudomonadota</taxon>
        <taxon>Gammaproteobacteria</taxon>
        <taxon>Enterobacterales</taxon>
        <taxon>Enterobacteriaceae</taxon>
        <taxon>Salmonella</taxon>
    </lineage>
</organism>
<gene>
    <name evidence="1" type="primary">pheS</name>
    <name type="ordered locus">SSPA1398</name>
</gene>